<name>Y416_ARCFU</name>
<evidence type="ECO:0000255" key="1"/>
<organism>
    <name type="scientific">Archaeoglobus fulgidus (strain ATCC 49558 / DSM 4304 / JCM 9628 / NBRC 100126 / VC-16)</name>
    <dbReference type="NCBI Taxonomy" id="224325"/>
    <lineage>
        <taxon>Archaea</taxon>
        <taxon>Methanobacteriati</taxon>
        <taxon>Methanobacteriota</taxon>
        <taxon>Archaeoglobi</taxon>
        <taxon>Archaeoglobales</taxon>
        <taxon>Archaeoglobaceae</taxon>
        <taxon>Archaeoglobus</taxon>
    </lineage>
</organism>
<gene>
    <name type="ordered locus">AF_0416</name>
</gene>
<reference key="1">
    <citation type="journal article" date="1997" name="Nature">
        <title>The complete genome sequence of the hyperthermophilic, sulphate-reducing archaeon Archaeoglobus fulgidus.</title>
        <authorList>
            <person name="Klenk H.-P."/>
            <person name="Clayton R.A."/>
            <person name="Tomb J.-F."/>
            <person name="White O."/>
            <person name="Nelson K.E."/>
            <person name="Ketchum K.A."/>
            <person name="Dodson R.J."/>
            <person name="Gwinn M.L."/>
            <person name="Hickey E.K."/>
            <person name="Peterson J.D."/>
            <person name="Richardson D.L."/>
            <person name="Kerlavage A.R."/>
            <person name="Graham D.E."/>
            <person name="Kyrpides N.C."/>
            <person name="Fleischmann R.D."/>
            <person name="Quackenbush J."/>
            <person name="Lee N.H."/>
            <person name="Sutton G.G."/>
            <person name="Gill S.R."/>
            <person name="Kirkness E.F."/>
            <person name="Dougherty B.A."/>
            <person name="McKenney K."/>
            <person name="Adams M.D."/>
            <person name="Loftus B.J."/>
            <person name="Peterson S.N."/>
            <person name="Reich C.I."/>
            <person name="McNeil L.K."/>
            <person name="Badger J.H."/>
            <person name="Glodek A."/>
            <person name="Zhou L."/>
            <person name="Overbeek R."/>
            <person name="Gocayne J.D."/>
            <person name="Weidman J.F."/>
            <person name="McDonald L.A."/>
            <person name="Utterback T.R."/>
            <person name="Cotton M.D."/>
            <person name="Spriggs T."/>
            <person name="Artiach P."/>
            <person name="Kaine B.P."/>
            <person name="Sykes S.M."/>
            <person name="Sadow P.W."/>
            <person name="D'Andrea K.P."/>
            <person name="Bowman C."/>
            <person name="Fujii C."/>
            <person name="Garland S.A."/>
            <person name="Mason T.M."/>
            <person name="Olsen G.J."/>
            <person name="Fraser C.M."/>
            <person name="Smith H.O."/>
            <person name="Woese C.R."/>
            <person name="Venter J.C."/>
        </authorList>
    </citation>
    <scope>NUCLEOTIDE SEQUENCE [LARGE SCALE GENOMIC DNA]</scope>
    <source>
        <strain>ATCC 49558 / DSM 4304 / JCM 9628 / NBRC 100126 / VC-16</strain>
    </source>
</reference>
<accession>O29831</accession>
<keyword id="KW-1185">Reference proteome</keyword>
<keyword id="KW-0732">Signal</keyword>
<proteinExistence type="inferred from homology"/>
<protein>
    <recommendedName>
        <fullName>Uncharacterized protein AF_0416</fullName>
    </recommendedName>
</protein>
<feature type="signal peptide" evidence="1">
    <location>
        <begin position="1"/>
        <end position="22"/>
    </location>
</feature>
<feature type="chain" id="PRO_0000013639" description="Uncharacterized protein AF_0416">
    <location>
        <begin position="23"/>
        <end position="62"/>
    </location>
</feature>
<dbReference type="EMBL" id="AE000782">
    <property type="protein sequence ID" value="AAB90816.1"/>
    <property type="molecule type" value="Genomic_DNA"/>
</dbReference>
<dbReference type="PIR" id="H69301">
    <property type="entry name" value="H69301"/>
</dbReference>
<dbReference type="RefSeq" id="WP_010877923.1">
    <property type="nucleotide sequence ID" value="NC_000917.1"/>
</dbReference>
<dbReference type="SMR" id="O29831"/>
<dbReference type="STRING" id="224325.AF_0416"/>
<dbReference type="PaxDb" id="224325-AF_0416"/>
<dbReference type="EnsemblBacteria" id="AAB90816">
    <property type="protein sequence ID" value="AAB90816"/>
    <property type="gene ID" value="AF_0416"/>
</dbReference>
<dbReference type="GeneID" id="1483632"/>
<dbReference type="KEGG" id="afu:AF_0416"/>
<dbReference type="eggNOG" id="arCOG11576">
    <property type="taxonomic scope" value="Archaea"/>
</dbReference>
<dbReference type="HOGENOM" id="CLU_2893016_0_0_2"/>
<dbReference type="Proteomes" id="UP000002199">
    <property type="component" value="Chromosome"/>
</dbReference>
<sequence>MVNVALLLDQIIATPLRSMVEAQQESANATVEFLTSLIDENGKPKGIELAYEQTVFDPERGL</sequence>